<name>MSRP_BURMA</name>
<comment type="function">
    <text evidence="1">Part of the MsrPQ system that repairs oxidized periplasmic proteins containing methionine sulfoxide residues (Met-O), using respiratory chain electrons. Thus protects these proteins from oxidative-stress damage caused by reactive species of oxygen and chlorine generated by the host defense mechanisms. MsrPQ is essential for the maintenance of envelope integrity under bleach stress, rescuing a wide series of structurally unrelated periplasmic proteins from methionine oxidation. The catalytic subunit MsrP is non-stereospecific, being able to reduce both (R-) and (S-) diastereoisomers of methionine sulfoxide.</text>
</comment>
<comment type="catalytic activity">
    <reaction evidence="1">
        <text>L-methionyl-[protein] + a quinone + H2O = L-methionyl-(S)-S-oxide-[protein] + a quinol</text>
        <dbReference type="Rhea" id="RHEA:51292"/>
        <dbReference type="Rhea" id="RHEA-COMP:12313"/>
        <dbReference type="Rhea" id="RHEA-COMP:12315"/>
        <dbReference type="ChEBI" id="CHEBI:15377"/>
        <dbReference type="ChEBI" id="CHEBI:16044"/>
        <dbReference type="ChEBI" id="CHEBI:24646"/>
        <dbReference type="ChEBI" id="CHEBI:44120"/>
        <dbReference type="ChEBI" id="CHEBI:132124"/>
    </reaction>
</comment>
<comment type="catalytic activity">
    <reaction evidence="1">
        <text>L-methionyl-[protein] + a quinone + H2O = L-methionyl-(R)-S-oxide-[protein] + a quinol</text>
        <dbReference type="Rhea" id="RHEA:51296"/>
        <dbReference type="Rhea" id="RHEA-COMP:12313"/>
        <dbReference type="Rhea" id="RHEA-COMP:12314"/>
        <dbReference type="ChEBI" id="CHEBI:15377"/>
        <dbReference type="ChEBI" id="CHEBI:16044"/>
        <dbReference type="ChEBI" id="CHEBI:24646"/>
        <dbReference type="ChEBI" id="CHEBI:45764"/>
        <dbReference type="ChEBI" id="CHEBI:132124"/>
    </reaction>
</comment>
<comment type="cofactor">
    <cofactor evidence="1">
        <name>Mo-molybdopterin</name>
        <dbReference type="ChEBI" id="CHEBI:71302"/>
    </cofactor>
    <text evidence="1">Binds 1 Mo-molybdopterin (Mo-MPT) cofactor per subunit.</text>
</comment>
<comment type="subunit">
    <text evidence="1">Heterodimer of a catalytic subunit (MsrP) and a heme-binding subunit (MsrQ).</text>
</comment>
<comment type="subcellular location">
    <subcellularLocation>
        <location evidence="1">Periplasm</location>
    </subcellularLocation>
    <text evidence="1">Is attached to the inner membrane when interacting with the MsrQ subunit.</text>
</comment>
<comment type="PTM">
    <text evidence="1">Predicted to be exported by the Tat system. The position of the signal peptide cleavage has not been experimentally proven.</text>
</comment>
<comment type="similarity">
    <text evidence="1">Belongs to the MsrP family.</text>
</comment>
<organism>
    <name type="scientific">Burkholderia mallei (strain ATCC 23344)</name>
    <dbReference type="NCBI Taxonomy" id="243160"/>
    <lineage>
        <taxon>Bacteria</taxon>
        <taxon>Pseudomonadati</taxon>
        <taxon>Pseudomonadota</taxon>
        <taxon>Betaproteobacteria</taxon>
        <taxon>Burkholderiales</taxon>
        <taxon>Burkholderiaceae</taxon>
        <taxon>Burkholderia</taxon>
        <taxon>pseudomallei group</taxon>
    </lineage>
</organism>
<gene>
    <name evidence="1" type="primary">msrP</name>
    <name type="ordered locus">BMA2758</name>
</gene>
<dbReference type="EC" id="1.8.5.-" evidence="1"/>
<dbReference type="EMBL" id="CP000010">
    <property type="protein sequence ID" value="AAU47906.1"/>
    <property type="molecule type" value="Genomic_DNA"/>
</dbReference>
<dbReference type="RefSeq" id="WP_004196774.1">
    <property type="nucleotide sequence ID" value="NC_006348.1"/>
</dbReference>
<dbReference type="RefSeq" id="YP_104276.1">
    <property type="nucleotide sequence ID" value="NC_006348.1"/>
</dbReference>
<dbReference type="SMR" id="Q62G98"/>
<dbReference type="GeneID" id="92980437"/>
<dbReference type="KEGG" id="bma:BMA2758"/>
<dbReference type="PATRIC" id="fig|243160.12.peg.2828"/>
<dbReference type="eggNOG" id="COG2041">
    <property type="taxonomic scope" value="Bacteria"/>
</dbReference>
<dbReference type="HOGENOM" id="CLU_045520_0_0_4"/>
<dbReference type="Proteomes" id="UP000006693">
    <property type="component" value="Chromosome 1"/>
</dbReference>
<dbReference type="GO" id="GO:0042597">
    <property type="term" value="C:periplasmic space"/>
    <property type="evidence" value="ECO:0007669"/>
    <property type="project" value="UniProtKB-SubCell"/>
</dbReference>
<dbReference type="GO" id="GO:0046872">
    <property type="term" value="F:metal ion binding"/>
    <property type="evidence" value="ECO:0007669"/>
    <property type="project" value="UniProtKB-KW"/>
</dbReference>
<dbReference type="GO" id="GO:0043546">
    <property type="term" value="F:molybdopterin cofactor binding"/>
    <property type="evidence" value="ECO:0007669"/>
    <property type="project" value="UniProtKB-UniRule"/>
</dbReference>
<dbReference type="GO" id="GO:0016672">
    <property type="term" value="F:oxidoreductase activity, acting on a sulfur group of donors, quinone or similar compound as acceptor"/>
    <property type="evidence" value="ECO:0007669"/>
    <property type="project" value="UniProtKB-UniRule"/>
</dbReference>
<dbReference type="GO" id="GO:0030091">
    <property type="term" value="P:protein repair"/>
    <property type="evidence" value="ECO:0007669"/>
    <property type="project" value="UniProtKB-UniRule"/>
</dbReference>
<dbReference type="CDD" id="cd02107">
    <property type="entry name" value="YedY_like_Moco"/>
    <property type="match status" value="1"/>
</dbReference>
<dbReference type="Gene3D" id="3.90.420.10">
    <property type="entry name" value="Oxidoreductase, molybdopterin-binding domain"/>
    <property type="match status" value="1"/>
</dbReference>
<dbReference type="HAMAP" id="MF_01206">
    <property type="entry name" value="MsrP"/>
    <property type="match status" value="1"/>
</dbReference>
<dbReference type="InterPro" id="IPR022867">
    <property type="entry name" value="MsrP"/>
</dbReference>
<dbReference type="InterPro" id="IPR000572">
    <property type="entry name" value="OxRdtase_Mopterin-bd_dom"/>
</dbReference>
<dbReference type="InterPro" id="IPR036374">
    <property type="entry name" value="OxRdtase_Mopterin-bd_sf"/>
</dbReference>
<dbReference type="InterPro" id="IPR006311">
    <property type="entry name" value="TAT_signal"/>
</dbReference>
<dbReference type="NCBIfam" id="NF003767">
    <property type="entry name" value="PRK05363.1"/>
    <property type="match status" value="1"/>
</dbReference>
<dbReference type="PANTHER" id="PTHR43032">
    <property type="entry name" value="PROTEIN-METHIONINE-SULFOXIDE REDUCTASE"/>
    <property type="match status" value="1"/>
</dbReference>
<dbReference type="PANTHER" id="PTHR43032:SF3">
    <property type="entry name" value="PROTEIN-METHIONINE-SULFOXIDE REDUCTASE CATALYTIC SUBUNIT MSRP"/>
    <property type="match status" value="1"/>
</dbReference>
<dbReference type="Pfam" id="PF00174">
    <property type="entry name" value="Oxidored_molyb"/>
    <property type="match status" value="1"/>
</dbReference>
<dbReference type="SUPFAM" id="SSF56524">
    <property type="entry name" value="Oxidoreductase molybdopterin-binding domain"/>
    <property type="match status" value="1"/>
</dbReference>
<dbReference type="PROSITE" id="PS51318">
    <property type="entry name" value="TAT"/>
    <property type="match status" value="1"/>
</dbReference>
<keyword id="KW-0479">Metal-binding</keyword>
<keyword id="KW-0500">Molybdenum</keyword>
<keyword id="KW-0560">Oxidoreductase</keyword>
<keyword id="KW-0574">Periplasm</keyword>
<keyword id="KW-1185">Reference proteome</keyword>
<keyword id="KW-0732">Signal</keyword>
<protein>
    <recommendedName>
        <fullName evidence="1">Protein-methionine-sulfoxide reductase catalytic subunit MsrP</fullName>
        <ecNumber evidence="1">1.8.5.-</ecNumber>
    </recommendedName>
</protein>
<evidence type="ECO:0000255" key="1">
    <source>
        <dbReference type="HAMAP-Rule" id="MF_01206"/>
    </source>
</evidence>
<feature type="signal peptide" description="Tat-type signal" evidence="1">
    <location>
        <begin position="1"/>
        <end position="57"/>
    </location>
</feature>
<feature type="chain" id="PRO_0000070678" description="Protein-methionine-sulfoxide reductase catalytic subunit MsrP" evidence="1">
    <location>
        <begin position="58"/>
        <end position="331"/>
    </location>
</feature>
<feature type="binding site" evidence="1">
    <location>
        <position position="90"/>
    </location>
    <ligand>
        <name>Mo-molybdopterin</name>
        <dbReference type="ChEBI" id="CHEBI:71302"/>
    </ligand>
</feature>
<feature type="binding site" evidence="1">
    <location>
        <begin position="93"/>
        <end position="94"/>
    </location>
    <ligand>
        <name>Mo-molybdopterin</name>
        <dbReference type="ChEBI" id="CHEBI:71302"/>
    </ligand>
</feature>
<feature type="binding site" evidence="1">
    <location>
        <position position="148"/>
    </location>
    <ligand>
        <name>Mo-molybdopterin</name>
        <dbReference type="ChEBI" id="CHEBI:71302"/>
    </ligand>
    <ligandPart>
        <name>Mo</name>
        <dbReference type="ChEBI" id="CHEBI:28685"/>
    </ligandPart>
</feature>
<feature type="binding site" evidence="1">
    <location>
        <position position="183"/>
    </location>
    <ligand>
        <name>Mo-molybdopterin</name>
        <dbReference type="ChEBI" id="CHEBI:71302"/>
    </ligand>
</feature>
<feature type="binding site" evidence="1">
    <location>
        <position position="231"/>
    </location>
    <ligand>
        <name>Mo-molybdopterin</name>
        <dbReference type="ChEBI" id="CHEBI:71302"/>
    </ligand>
</feature>
<feature type="binding site" evidence="1">
    <location>
        <position position="236"/>
    </location>
    <ligand>
        <name>Mo-molybdopterin</name>
        <dbReference type="ChEBI" id="CHEBI:71302"/>
    </ligand>
</feature>
<feature type="binding site" evidence="1">
    <location>
        <begin position="247"/>
        <end position="249"/>
    </location>
    <ligand>
        <name>Mo-molybdopterin</name>
        <dbReference type="ChEBI" id="CHEBI:71302"/>
    </ligand>
</feature>
<proteinExistence type="inferred from homology"/>
<sequence length="331" mass="37121">MLIKKTLRAALAGDDIPRSEITPRAVFEHRRRILQAAGAAAAGGLVGAHGLALAAYASPDATARKLAAPANPKFVVPEKVTSFKDITTYNNFYEFGTDKSDPARRAGTLRPHPWRVSVEGEVRNPKVYDIDALLKLAPLEERVYRLRCVEGWSMVIPWIGFPLAELIKRVEPTANAKYVQFVTLADPSQMPGLSAPILDWPYSEGLRMDEAMNPLTLLTIGVYGQVLPNQNGAPVRVIVPWKYGFKSAKSIVKIRFVDRQPPTSWNTYAPNEYGFYSNVNPNVDHPRWSQATERRIGEDGFFTPKRKTLMFNGYGDWVASMYRGMDLKKYF</sequence>
<accession>Q62G98</accession>
<reference key="1">
    <citation type="journal article" date="2004" name="Proc. Natl. Acad. Sci. U.S.A.">
        <title>Structural flexibility in the Burkholderia mallei genome.</title>
        <authorList>
            <person name="Nierman W.C."/>
            <person name="DeShazer D."/>
            <person name="Kim H.S."/>
            <person name="Tettelin H."/>
            <person name="Nelson K.E."/>
            <person name="Feldblyum T.V."/>
            <person name="Ulrich R.L."/>
            <person name="Ronning C.M."/>
            <person name="Brinkac L.M."/>
            <person name="Daugherty S.C."/>
            <person name="Davidsen T.D."/>
            <person name="DeBoy R.T."/>
            <person name="Dimitrov G."/>
            <person name="Dodson R.J."/>
            <person name="Durkin A.S."/>
            <person name="Gwinn M.L."/>
            <person name="Haft D.H."/>
            <person name="Khouri H.M."/>
            <person name="Kolonay J.F."/>
            <person name="Madupu R."/>
            <person name="Mohammoud Y."/>
            <person name="Nelson W.C."/>
            <person name="Radune D."/>
            <person name="Romero C.M."/>
            <person name="Sarria S."/>
            <person name="Selengut J."/>
            <person name="Shamblin C."/>
            <person name="Sullivan S.A."/>
            <person name="White O."/>
            <person name="Yu Y."/>
            <person name="Zafar N."/>
            <person name="Zhou L."/>
            <person name="Fraser C.M."/>
        </authorList>
    </citation>
    <scope>NUCLEOTIDE SEQUENCE [LARGE SCALE GENOMIC DNA]</scope>
    <source>
        <strain>ATCC 23344</strain>
    </source>
</reference>